<name>HMUU_YERPE</name>
<gene>
    <name type="primary">hmuU</name>
    <name type="ordered locus">YPO0280</name>
    <name type="ordered locus">y0540</name>
    <name type="ordered locus">YP_0435</name>
</gene>
<reference key="1">
    <citation type="journal article" date="1996" name="Mol. Microbiol.">
        <title>The hmu locus of Yersinia pestis is essential for utilization of free haemin and haem-protein complexes as iron sources.</title>
        <authorList>
            <person name="Hornung J.M."/>
            <person name="Jones H.A."/>
            <person name="Perry R.D."/>
        </authorList>
    </citation>
    <scope>NUCLEOTIDE SEQUENCE [GENOMIC DNA]</scope>
    <source>
        <strain>KIM6</strain>
    </source>
</reference>
<reference key="2">
    <citation type="submission" date="1998-10" db="EMBL/GenBank/DDBJ databases">
        <title>hmuRSTUV of Yersinia pestis encodes an ABC transport system necessary for hemin utilization.</title>
        <authorList>
            <person name="Hornung J.M."/>
            <person name="Jones H.A."/>
            <person name="Bertolino V.J."/>
            <person name="Perry R.D."/>
        </authorList>
    </citation>
    <scope>SEQUENCE REVISION TO 270</scope>
    <source>
        <strain>KIM6</strain>
    </source>
</reference>
<reference key="3">
    <citation type="journal article" date="2001" name="Nature">
        <title>Genome sequence of Yersinia pestis, the causative agent of plague.</title>
        <authorList>
            <person name="Parkhill J."/>
            <person name="Wren B.W."/>
            <person name="Thomson N.R."/>
            <person name="Titball R.W."/>
            <person name="Holden M.T.G."/>
            <person name="Prentice M.B."/>
            <person name="Sebaihia M."/>
            <person name="James K.D."/>
            <person name="Churcher C.M."/>
            <person name="Mungall K.L."/>
            <person name="Baker S."/>
            <person name="Basham D."/>
            <person name="Bentley S.D."/>
            <person name="Brooks K."/>
            <person name="Cerdeno-Tarraga A.-M."/>
            <person name="Chillingworth T."/>
            <person name="Cronin A."/>
            <person name="Davies R.M."/>
            <person name="Davis P."/>
            <person name="Dougan G."/>
            <person name="Feltwell T."/>
            <person name="Hamlin N."/>
            <person name="Holroyd S."/>
            <person name="Jagels K."/>
            <person name="Karlyshev A.V."/>
            <person name="Leather S."/>
            <person name="Moule S."/>
            <person name="Oyston P.C.F."/>
            <person name="Quail M.A."/>
            <person name="Rutherford K.M."/>
            <person name="Simmonds M."/>
            <person name="Skelton J."/>
            <person name="Stevens K."/>
            <person name="Whitehead S."/>
            <person name="Barrell B.G."/>
        </authorList>
    </citation>
    <scope>NUCLEOTIDE SEQUENCE [LARGE SCALE GENOMIC DNA]</scope>
    <source>
        <strain>CO-92 / Biovar Orientalis</strain>
    </source>
</reference>
<reference key="4">
    <citation type="journal article" date="2002" name="J. Bacteriol.">
        <title>Genome sequence of Yersinia pestis KIM.</title>
        <authorList>
            <person name="Deng W."/>
            <person name="Burland V."/>
            <person name="Plunkett G. III"/>
            <person name="Boutin A."/>
            <person name="Mayhew G.F."/>
            <person name="Liss P."/>
            <person name="Perna N.T."/>
            <person name="Rose D.J."/>
            <person name="Mau B."/>
            <person name="Zhou S."/>
            <person name="Schwartz D.C."/>
            <person name="Fetherston J.D."/>
            <person name="Lindler L.E."/>
            <person name="Brubaker R.R."/>
            <person name="Plano G.V."/>
            <person name="Straley S.C."/>
            <person name="McDonough K.A."/>
            <person name="Nilles M.L."/>
            <person name="Matson J.S."/>
            <person name="Blattner F.R."/>
            <person name="Perry R.D."/>
        </authorList>
    </citation>
    <scope>NUCLEOTIDE SEQUENCE [LARGE SCALE GENOMIC DNA]</scope>
    <source>
        <strain>KIM10+ / Biovar Mediaevalis</strain>
    </source>
</reference>
<reference key="5">
    <citation type="journal article" date="2004" name="DNA Res.">
        <title>Complete genome sequence of Yersinia pestis strain 91001, an isolate avirulent to humans.</title>
        <authorList>
            <person name="Song Y."/>
            <person name="Tong Z."/>
            <person name="Wang J."/>
            <person name="Wang L."/>
            <person name="Guo Z."/>
            <person name="Han Y."/>
            <person name="Zhang J."/>
            <person name="Pei D."/>
            <person name="Zhou D."/>
            <person name="Qin H."/>
            <person name="Pang X."/>
            <person name="Han Y."/>
            <person name="Zhai J."/>
            <person name="Li M."/>
            <person name="Cui B."/>
            <person name="Qi Z."/>
            <person name="Jin L."/>
            <person name="Dai R."/>
            <person name="Chen F."/>
            <person name="Li S."/>
            <person name="Ye C."/>
            <person name="Du Z."/>
            <person name="Lin W."/>
            <person name="Wang J."/>
            <person name="Yu J."/>
            <person name="Yang H."/>
            <person name="Wang J."/>
            <person name="Huang P."/>
            <person name="Yang R."/>
        </authorList>
    </citation>
    <scope>NUCLEOTIDE SEQUENCE [LARGE SCALE GENOMIC DNA]</scope>
    <source>
        <strain>91001 / Biovar Mediaevalis</strain>
    </source>
</reference>
<proteinExistence type="evidence at protein level"/>
<dbReference type="EMBL" id="U60647">
    <property type="protein sequence ID" value="AAC64869.1"/>
    <property type="molecule type" value="Genomic_DNA"/>
</dbReference>
<dbReference type="EMBL" id="AL590842">
    <property type="protein sequence ID" value="CAL18966.1"/>
    <property type="molecule type" value="Genomic_DNA"/>
</dbReference>
<dbReference type="EMBL" id="AE009952">
    <property type="protein sequence ID" value="AAM84128.1"/>
    <property type="molecule type" value="Genomic_DNA"/>
</dbReference>
<dbReference type="EMBL" id="AE017042">
    <property type="protein sequence ID" value="AAS60706.1"/>
    <property type="molecule type" value="Genomic_DNA"/>
</dbReference>
<dbReference type="PIR" id="AD0035">
    <property type="entry name" value="AD0035"/>
</dbReference>
<dbReference type="PIR" id="T12072">
    <property type="entry name" value="T12072"/>
</dbReference>
<dbReference type="RefSeq" id="WP_002209059.1">
    <property type="nucleotide sequence ID" value="NZ_WUCM01000046.1"/>
</dbReference>
<dbReference type="RefSeq" id="YP_002345362.1">
    <property type="nucleotide sequence ID" value="NC_003143.1"/>
</dbReference>
<dbReference type="PDB" id="4G1U">
    <property type="method" value="X-ray"/>
    <property type="resolution" value="3.01 A"/>
    <property type="chains" value="A/B=1-334"/>
</dbReference>
<dbReference type="PDBsum" id="4G1U"/>
<dbReference type="SMR" id="Q56992"/>
<dbReference type="DIP" id="DIP-60000N"/>
<dbReference type="IntAct" id="Q56992">
    <property type="interactions" value="2"/>
</dbReference>
<dbReference type="STRING" id="214092.YPO0280"/>
<dbReference type="TCDB" id="3.A.1.14.5">
    <property type="family name" value="the atp-binding cassette (abc) superfamily"/>
</dbReference>
<dbReference type="PaxDb" id="214092-YPO0280"/>
<dbReference type="EnsemblBacteria" id="AAS60706">
    <property type="protein sequence ID" value="AAS60706"/>
    <property type="gene ID" value="YP_0435"/>
</dbReference>
<dbReference type="KEGG" id="ype:YPO0280"/>
<dbReference type="KEGG" id="ypk:y0540"/>
<dbReference type="KEGG" id="ypm:YP_0435"/>
<dbReference type="PATRIC" id="fig|214092.21.peg.513"/>
<dbReference type="eggNOG" id="COG0609">
    <property type="taxonomic scope" value="Bacteria"/>
</dbReference>
<dbReference type="HOGENOM" id="CLU_013016_0_3_6"/>
<dbReference type="OMA" id="MQGVFGN"/>
<dbReference type="OrthoDB" id="9055647at2"/>
<dbReference type="EvolutionaryTrace" id="Q56992"/>
<dbReference type="Proteomes" id="UP000000815">
    <property type="component" value="Chromosome"/>
</dbReference>
<dbReference type="Proteomes" id="UP000001019">
    <property type="component" value="Chromosome"/>
</dbReference>
<dbReference type="Proteomes" id="UP000002490">
    <property type="component" value="Chromosome"/>
</dbReference>
<dbReference type="GO" id="GO:0005886">
    <property type="term" value="C:plasma membrane"/>
    <property type="evidence" value="ECO:0000318"/>
    <property type="project" value="GO_Central"/>
</dbReference>
<dbReference type="GO" id="GO:0022857">
    <property type="term" value="F:transmembrane transporter activity"/>
    <property type="evidence" value="ECO:0000318"/>
    <property type="project" value="GO_Central"/>
</dbReference>
<dbReference type="GO" id="GO:0033214">
    <property type="term" value="P:siderophore-dependent iron import into cell"/>
    <property type="evidence" value="ECO:0000318"/>
    <property type="project" value="GO_Central"/>
</dbReference>
<dbReference type="CDD" id="cd06550">
    <property type="entry name" value="TM_ABC_iron-siderophores_like"/>
    <property type="match status" value="1"/>
</dbReference>
<dbReference type="FunFam" id="1.10.3470.10:FF:000001">
    <property type="entry name" value="Vitamin B12 ABC transporter permease BtuC"/>
    <property type="match status" value="1"/>
</dbReference>
<dbReference type="Gene3D" id="1.10.3470.10">
    <property type="entry name" value="ABC transporter involved in vitamin B12 uptake, BtuC"/>
    <property type="match status" value="1"/>
</dbReference>
<dbReference type="InterPro" id="IPR037294">
    <property type="entry name" value="ABC_BtuC-like"/>
</dbReference>
<dbReference type="InterPro" id="IPR000522">
    <property type="entry name" value="ABC_transptr_permease_BtuC"/>
</dbReference>
<dbReference type="PANTHER" id="PTHR30472:SF25">
    <property type="entry name" value="ABC TRANSPORTER PERMEASE PROTEIN MJ0876-RELATED"/>
    <property type="match status" value="1"/>
</dbReference>
<dbReference type="PANTHER" id="PTHR30472">
    <property type="entry name" value="FERRIC ENTEROBACTIN TRANSPORT SYSTEM PERMEASE PROTEIN"/>
    <property type="match status" value="1"/>
</dbReference>
<dbReference type="Pfam" id="PF01032">
    <property type="entry name" value="FecCD"/>
    <property type="match status" value="1"/>
</dbReference>
<dbReference type="SUPFAM" id="SSF81345">
    <property type="entry name" value="ABC transporter involved in vitamin B12 uptake, BtuC"/>
    <property type="match status" value="1"/>
</dbReference>
<keyword id="KW-0002">3D-structure</keyword>
<keyword id="KW-0997">Cell inner membrane</keyword>
<keyword id="KW-1003">Cell membrane</keyword>
<keyword id="KW-0406">Ion transport</keyword>
<keyword id="KW-0408">Iron</keyword>
<keyword id="KW-0410">Iron transport</keyword>
<keyword id="KW-0472">Membrane</keyword>
<keyword id="KW-1185">Reference proteome</keyword>
<keyword id="KW-0812">Transmembrane</keyword>
<keyword id="KW-1133">Transmembrane helix</keyword>
<keyword id="KW-0813">Transport</keyword>
<organism>
    <name type="scientific">Yersinia pestis</name>
    <dbReference type="NCBI Taxonomy" id="632"/>
    <lineage>
        <taxon>Bacteria</taxon>
        <taxon>Pseudomonadati</taxon>
        <taxon>Pseudomonadota</taxon>
        <taxon>Gammaproteobacteria</taxon>
        <taxon>Enterobacterales</taxon>
        <taxon>Yersiniaceae</taxon>
        <taxon>Yersinia</taxon>
    </lineage>
</organism>
<feature type="chain" id="PRO_0000060053" description="Hemin transport system permease protein HmuU">
    <location>
        <begin position="1"/>
        <end position="334"/>
    </location>
</feature>
<feature type="transmembrane region" description="Helical" evidence="1">
    <location>
        <begin position="9"/>
        <end position="29"/>
    </location>
</feature>
<feature type="transmembrane region" description="Helical" evidence="1">
    <location>
        <begin position="60"/>
        <end position="80"/>
    </location>
</feature>
<feature type="transmembrane region" description="Helical" evidence="1">
    <location>
        <begin position="96"/>
        <end position="116"/>
    </location>
</feature>
<feature type="transmembrane region" description="Helical" evidence="1">
    <location>
        <begin position="117"/>
        <end position="137"/>
    </location>
</feature>
<feature type="transmembrane region" description="Helical" evidence="1">
    <location>
        <begin position="149"/>
        <end position="169"/>
    </location>
</feature>
<feature type="transmembrane region" description="Helical" evidence="1">
    <location>
        <begin position="191"/>
        <end position="211"/>
    </location>
</feature>
<feature type="transmembrane region" description="Helical" evidence="1">
    <location>
        <begin position="244"/>
        <end position="264"/>
    </location>
</feature>
<feature type="transmembrane region" description="Helical" evidence="1">
    <location>
        <begin position="278"/>
        <end position="298"/>
    </location>
</feature>
<feature type="transmembrane region" description="Helical" evidence="1">
    <location>
        <begin position="306"/>
        <end position="326"/>
    </location>
</feature>
<feature type="helix" evidence="3">
    <location>
        <begin position="7"/>
        <end position="27"/>
    </location>
</feature>
<feature type="turn" evidence="3">
    <location>
        <begin position="49"/>
        <end position="54"/>
    </location>
</feature>
<feature type="helix" evidence="3">
    <location>
        <begin position="55"/>
        <end position="79"/>
    </location>
</feature>
<feature type="turn" evidence="3">
    <location>
        <begin position="87"/>
        <end position="91"/>
    </location>
</feature>
<feature type="helix" evidence="3">
    <location>
        <begin position="92"/>
        <end position="104"/>
    </location>
</feature>
<feature type="helix" evidence="3">
    <location>
        <begin position="115"/>
        <end position="140"/>
    </location>
</feature>
<feature type="helix" evidence="3">
    <location>
        <begin position="145"/>
        <end position="169"/>
    </location>
</feature>
<feature type="helix" evidence="3">
    <location>
        <begin position="173"/>
        <end position="181"/>
    </location>
</feature>
<feature type="turn" evidence="3">
    <location>
        <begin position="182"/>
        <end position="184"/>
    </location>
</feature>
<feature type="helix" evidence="3">
    <location>
        <begin position="191"/>
        <end position="210"/>
    </location>
</feature>
<feature type="helix" evidence="3">
    <location>
        <begin position="212"/>
        <end position="217"/>
    </location>
</feature>
<feature type="helix" evidence="3">
    <location>
        <begin position="218"/>
        <end position="220"/>
    </location>
</feature>
<feature type="helix" evidence="3">
    <location>
        <begin position="222"/>
        <end position="227"/>
    </location>
</feature>
<feature type="helix" evidence="3">
    <location>
        <begin position="232"/>
        <end position="254"/>
    </location>
</feature>
<feature type="turn" evidence="3">
    <location>
        <begin position="260"/>
        <end position="262"/>
    </location>
</feature>
<feature type="helix" evidence="3">
    <location>
        <begin position="263"/>
        <end position="269"/>
    </location>
</feature>
<feature type="helix" evidence="3">
    <location>
        <begin position="276"/>
        <end position="298"/>
    </location>
</feature>
<feature type="helix" evidence="3">
    <location>
        <begin position="309"/>
        <end position="325"/>
    </location>
</feature>
<sequence length="334" mass="35540">MNGRVQPRLMLGFLLILLVILALGSANMGALSLSFRTLWNTSTNDAMWHIWLNIRLPRVLLAVVVGCALAVSGTIMQGLFRNPLADPGLLGISSGAALCVGLIIVMPFSLPPLLALYSHMVGAFIGSLAISTIIFTLSRWGHGNLARLLLAGIAINALCGAAVGVLTYISDDQQLRQFSLWSMGSLGQAQWSTLLVASSLILPTCILGLLQARQLNLLQLGDEEAHYLGVNVRQAKLRLLLLSAILIGAAVAVSGVIGFIGLVVPHLIRMRIGADHRWLLPGAALGGACLLLTADTLARTLVAPAEMPVGLLTSLLGGPYFLWLILRQREQRSG</sequence>
<evidence type="ECO:0000255" key="1"/>
<evidence type="ECO:0000305" key="2"/>
<evidence type="ECO:0007829" key="3">
    <source>
        <dbReference type="PDB" id="4G1U"/>
    </source>
</evidence>
<accession>Q56992</accession>
<accession>Q0WK26</accession>
<comment type="function">
    <text>Part of the binding-protein-dependent transport system for hemin; probably responsible for the translocation of the substrate across the membrane.</text>
</comment>
<comment type="interaction">
    <interactant intactId="EBI-16023192">
        <id>Q56992</id>
    </interactant>
    <interactant intactId="EBI-2866017">
        <id>Q56993</id>
        <label>hmuV</label>
    </interactant>
    <organismsDiffer>false</organismsDiffer>
    <experiments>3</experiments>
</comment>
<comment type="subcellular location">
    <subcellularLocation>
        <location>Cell inner membrane</location>
        <topology>Multi-pass membrane protein</topology>
    </subcellularLocation>
</comment>
<comment type="similarity">
    <text evidence="2">Belongs to the binding-protein-dependent transport system permease family. FecCD subfamily.</text>
</comment>
<protein>
    <recommendedName>
        <fullName>Hemin transport system permease protein HmuU</fullName>
    </recommendedName>
</protein>